<keyword id="KW-0274">FAD</keyword>
<keyword id="KW-0285">Flavoprotein</keyword>
<keyword id="KW-0520">NAD</keyword>
<keyword id="KW-0560">Oxidoreductase</keyword>
<reference key="1">
    <citation type="journal article" date="2003" name="Genome Res.">
        <title>Comparative genome analysis of Vibrio vulnificus, a marine pathogen.</title>
        <authorList>
            <person name="Chen C.-Y."/>
            <person name="Wu K.-M."/>
            <person name="Chang Y.-C."/>
            <person name="Chang C.-H."/>
            <person name="Tsai H.-C."/>
            <person name="Liao T.-L."/>
            <person name="Liu Y.-M."/>
            <person name="Chen H.-J."/>
            <person name="Shen A.B.-T."/>
            <person name="Li J.-C."/>
            <person name="Su T.-L."/>
            <person name="Shao C.-P."/>
            <person name="Lee C.-T."/>
            <person name="Hor L.-I."/>
            <person name="Tsai S.-F."/>
        </authorList>
    </citation>
    <scope>NUCLEOTIDE SEQUENCE [LARGE SCALE GENOMIC DNA]</scope>
    <source>
        <strain>YJ016</strain>
    </source>
</reference>
<proteinExistence type="inferred from homology"/>
<accession>Q7MF12</accession>
<feature type="chain" id="PRO_0000205607" description="Oxygen-dependent choline dehydrogenase">
    <location>
        <begin position="1"/>
        <end position="560"/>
    </location>
</feature>
<feature type="active site" description="Proton acceptor" evidence="1">
    <location>
        <position position="470"/>
    </location>
</feature>
<feature type="binding site" evidence="1">
    <location>
        <begin position="6"/>
        <end position="35"/>
    </location>
    <ligand>
        <name>FAD</name>
        <dbReference type="ChEBI" id="CHEBI:57692"/>
    </ligand>
</feature>
<name>BETA_VIBVY</name>
<comment type="function">
    <text evidence="1">Involved in the biosynthesis of the osmoprotectant glycine betaine. Catalyzes the oxidation of choline to betaine aldehyde and betaine aldehyde to glycine betaine at the same rate.</text>
</comment>
<comment type="catalytic activity">
    <reaction evidence="1">
        <text>choline + A = betaine aldehyde + AH2</text>
        <dbReference type="Rhea" id="RHEA:17433"/>
        <dbReference type="ChEBI" id="CHEBI:13193"/>
        <dbReference type="ChEBI" id="CHEBI:15354"/>
        <dbReference type="ChEBI" id="CHEBI:15710"/>
        <dbReference type="ChEBI" id="CHEBI:17499"/>
        <dbReference type="EC" id="1.1.99.1"/>
    </reaction>
</comment>
<comment type="catalytic activity">
    <reaction evidence="1">
        <text>betaine aldehyde + NAD(+) + H2O = glycine betaine + NADH + 2 H(+)</text>
        <dbReference type="Rhea" id="RHEA:15305"/>
        <dbReference type="ChEBI" id="CHEBI:15377"/>
        <dbReference type="ChEBI" id="CHEBI:15378"/>
        <dbReference type="ChEBI" id="CHEBI:15710"/>
        <dbReference type="ChEBI" id="CHEBI:17750"/>
        <dbReference type="ChEBI" id="CHEBI:57540"/>
        <dbReference type="ChEBI" id="CHEBI:57945"/>
        <dbReference type="EC" id="1.2.1.8"/>
    </reaction>
</comment>
<comment type="cofactor">
    <cofactor evidence="1">
        <name>FAD</name>
        <dbReference type="ChEBI" id="CHEBI:57692"/>
    </cofactor>
</comment>
<comment type="pathway">
    <text evidence="1">Amine and polyamine biosynthesis; betaine biosynthesis via choline pathway; betaine aldehyde from choline (cytochrome c reductase route): step 1/1.</text>
</comment>
<comment type="similarity">
    <text evidence="1">Belongs to the GMC oxidoreductase family.</text>
</comment>
<evidence type="ECO:0000255" key="1">
    <source>
        <dbReference type="HAMAP-Rule" id="MF_00750"/>
    </source>
</evidence>
<sequence>MQQHYDYIIVGAGSAGCVLADRLSESGDHSVLLLEAGGSDKSIFIQMPTALSYPMNSEKYAWQFETDAEADLDGRRLHCPRGKVLGGSSSINGMVYVRGHACDFDEWEEQGAKGWNYQACLPYFRRAENWIDGEDEYRGGDGPLSTCAGNKMTLNPLYRAFIDAGKEAGYPETSDYNGYQQEGFGPMHMTVKNGVRASTSNAYLSRAKKRSNFKLIKGVVVQRILLEEKRAVGVEFELAGELRTCFAKNEVISSAGSIGSVQLLQLSGIGPKTVLEKAGVTPVYHLPGVGQNLQDHLEVYFQYHCQKPITLNGKLDWFSKGLIGTEWILTRKGLGATNHFESCAFIRSRAGLKWPNIQYHFLPAAMRYDGQAAFDGHGFQVHVGPNKPESRGRVEIVSANPLDKPKIQFNYLSTERDRQDWRDCIRLTREILAQPAMDEFRGEEIQPGINVATDAEIDQWVKENVESAYHPSCSCKMGADDDPMAVLDEECRVRGITNLRVVDSSVFPTIPNGNLNAPTIMVAERAADLILHKQPLPPQRSKVWLAPSWETQQRTGEPMR</sequence>
<protein>
    <recommendedName>
        <fullName evidence="1">Oxygen-dependent choline dehydrogenase</fullName>
        <shortName evidence="1">CDH</shortName>
        <shortName evidence="1">CHD</shortName>
        <ecNumber evidence="1">1.1.99.1</ecNumber>
    </recommendedName>
    <alternativeName>
        <fullName evidence="1">Betaine aldehyde dehydrogenase</fullName>
        <shortName evidence="1">BADH</shortName>
        <ecNumber evidence="1">1.2.1.8</ecNumber>
    </alternativeName>
</protein>
<organism>
    <name type="scientific">Vibrio vulnificus (strain YJ016)</name>
    <dbReference type="NCBI Taxonomy" id="196600"/>
    <lineage>
        <taxon>Bacteria</taxon>
        <taxon>Pseudomonadati</taxon>
        <taxon>Pseudomonadota</taxon>
        <taxon>Gammaproteobacteria</taxon>
        <taxon>Vibrionales</taxon>
        <taxon>Vibrionaceae</taxon>
        <taxon>Vibrio</taxon>
    </lineage>
</organism>
<dbReference type="EC" id="1.1.99.1" evidence="1"/>
<dbReference type="EC" id="1.2.1.8" evidence="1"/>
<dbReference type="EMBL" id="BA000038">
    <property type="protein sequence ID" value="BAC96534.1"/>
    <property type="molecule type" value="Genomic_DNA"/>
</dbReference>
<dbReference type="RefSeq" id="WP_011151879.1">
    <property type="nucleotide sequence ID" value="NC_005140.1"/>
</dbReference>
<dbReference type="SMR" id="Q7MF12"/>
<dbReference type="STRING" id="672.VV93_v1c35150"/>
<dbReference type="KEGG" id="vvy:VVA0508"/>
<dbReference type="PATRIC" id="fig|196600.6.peg.3708"/>
<dbReference type="eggNOG" id="COG2303">
    <property type="taxonomic scope" value="Bacteria"/>
</dbReference>
<dbReference type="HOGENOM" id="CLU_002865_7_1_6"/>
<dbReference type="UniPathway" id="UPA00529">
    <property type="reaction ID" value="UER00385"/>
</dbReference>
<dbReference type="Proteomes" id="UP000002675">
    <property type="component" value="Chromosome II"/>
</dbReference>
<dbReference type="GO" id="GO:0016020">
    <property type="term" value="C:membrane"/>
    <property type="evidence" value="ECO:0007669"/>
    <property type="project" value="TreeGrafter"/>
</dbReference>
<dbReference type="GO" id="GO:0008802">
    <property type="term" value="F:betaine-aldehyde dehydrogenase (NAD+) activity"/>
    <property type="evidence" value="ECO:0007669"/>
    <property type="project" value="UniProtKB-EC"/>
</dbReference>
<dbReference type="GO" id="GO:0008812">
    <property type="term" value="F:choline dehydrogenase activity"/>
    <property type="evidence" value="ECO:0007669"/>
    <property type="project" value="UniProtKB-UniRule"/>
</dbReference>
<dbReference type="GO" id="GO:0050660">
    <property type="term" value="F:flavin adenine dinucleotide binding"/>
    <property type="evidence" value="ECO:0007669"/>
    <property type="project" value="InterPro"/>
</dbReference>
<dbReference type="GO" id="GO:0019285">
    <property type="term" value="P:glycine betaine biosynthetic process from choline"/>
    <property type="evidence" value="ECO:0007669"/>
    <property type="project" value="UniProtKB-UniRule"/>
</dbReference>
<dbReference type="Gene3D" id="3.50.50.60">
    <property type="entry name" value="FAD/NAD(P)-binding domain"/>
    <property type="match status" value="1"/>
</dbReference>
<dbReference type="Gene3D" id="3.30.560.10">
    <property type="entry name" value="Glucose Oxidase, domain 3"/>
    <property type="match status" value="1"/>
</dbReference>
<dbReference type="HAMAP" id="MF_00750">
    <property type="entry name" value="Choline_dehydrogen"/>
    <property type="match status" value="1"/>
</dbReference>
<dbReference type="InterPro" id="IPR011533">
    <property type="entry name" value="BetA"/>
</dbReference>
<dbReference type="InterPro" id="IPR036188">
    <property type="entry name" value="FAD/NAD-bd_sf"/>
</dbReference>
<dbReference type="InterPro" id="IPR012132">
    <property type="entry name" value="GMC_OxRdtase"/>
</dbReference>
<dbReference type="InterPro" id="IPR000172">
    <property type="entry name" value="GMC_OxRdtase_N"/>
</dbReference>
<dbReference type="InterPro" id="IPR007867">
    <property type="entry name" value="GMC_OxRtase_C"/>
</dbReference>
<dbReference type="NCBIfam" id="TIGR01810">
    <property type="entry name" value="betA"/>
    <property type="match status" value="1"/>
</dbReference>
<dbReference type="NCBIfam" id="NF002550">
    <property type="entry name" value="PRK02106.1"/>
    <property type="match status" value="1"/>
</dbReference>
<dbReference type="PANTHER" id="PTHR11552:SF147">
    <property type="entry name" value="CHOLINE DEHYDROGENASE, MITOCHONDRIAL"/>
    <property type="match status" value="1"/>
</dbReference>
<dbReference type="PANTHER" id="PTHR11552">
    <property type="entry name" value="GLUCOSE-METHANOL-CHOLINE GMC OXIDOREDUCTASE"/>
    <property type="match status" value="1"/>
</dbReference>
<dbReference type="Pfam" id="PF05199">
    <property type="entry name" value="GMC_oxred_C"/>
    <property type="match status" value="1"/>
</dbReference>
<dbReference type="Pfam" id="PF00732">
    <property type="entry name" value="GMC_oxred_N"/>
    <property type="match status" value="1"/>
</dbReference>
<dbReference type="PIRSF" id="PIRSF000137">
    <property type="entry name" value="Alcohol_oxidase"/>
    <property type="match status" value="1"/>
</dbReference>
<dbReference type="SUPFAM" id="SSF54373">
    <property type="entry name" value="FAD-linked reductases, C-terminal domain"/>
    <property type="match status" value="1"/>
</dbReference>
<dbReference type="SUPFAM" id="SSF51905">
    <property type="entry name" value="FAD/NAD(P)-binding domain"/>
    <property type="match status" value="1"/>
</dbReference>
<dbReference type="PROSITE" id="PS00623">
    <property type="entry name" value="GMC_OXRED_1"/>
    <property type="match status" value="1"/>
</dbReference>
<gene>
    <name evidence="1" type="primary">betA</name>
    <name type="ordered locus">VVA0508</name>
</gene>